<reference key="1">
    <citation type="journal article" date="2007" name="Science">
        <title>Legumes symbioses: absence of nod genes in photosynthetic bradyrhizobia.</title>
        <authorList>
            <person name="Giraud E."/>
            <person name="Moulin L."/>
            <person name="Vallenet D."/>
            <person name="Barbe V."/>
            <person name="Cytryn E."/>
            <person name="Avarre J.-C."/>
            <person name="Jaubert M."/>
            <person name="Simon D."/>
            <person name="Cartieaux F."/>
            <person name="Prin Y."/>
            <person name="Bena G."/>
            <person name="Hannibal L."/>
            <person name="Fardoux J."/>
            <person name="Kojadinovic M."/>
            <person name="Vuillet L."/>
            <person name="Lajus A."/>
            <person name="Cruveiller S."/>
            <person name="Rouy Z."/>
            <person name="Mangenot S."/>
            <person name="Segurens B."/>
            <person name="Dossat C."/>
            <person name="Franck W.L."/>
            <person name="Chang W.-S."/>
            <person name="Saunders E."/>
            <person name="Bruce D."/>
            <person name="Richardson P."/>
            <person name="Normand P."/>
            <person name="Dreyfus B."/>
            <person name="Pignol D."/>
            <person name="Stacey G."/>
            <person name="Emerich D."/>
            <person name="Vermeglio A."/>
            <person name="Medigue C."/>
            <person name="Sadowsky M."/>
        </authorList>
    </citation>
    <scope>NUCLEOTIDE SEQUENCE [LARGE SCALE GENOMIC DNA]</scope>
    <source>
        <strain>BTAi1 / ATCC BAA-1182</strain>
    </source>
</reference>
<feature type="chain" id="PRO_1000024710" description="Adenosylhomocysteinase">
    <location>
        <begin position="1"/>
        <end position="473"/>
    </location>
</feature>
<feature type="binding site" evidence="1">
    <location>
        <position position="60"/>
    </location>
    <ligand>
        <name>substrate</name>
    </ligand>
</feature>
<feature type="binding site" evidence="1">
    <location>
        <position position="135"/>
    </location>
    <ligand>
        <name>substrate</name>
    </ligand>
</feature>
<feature type="binding site" evidence="1">
    <location>
        <position position="197"/>
    </location>
    <ligand>
        <name>substrate</name>
    </ligand>
</feature>
<feature type="binding site" evidence="1">
    <location>
        <begin position="198"/>
        <end position="200"/>
    </location>
    <ligand>
        <name>NAD(+)</name>
        <dbReference type="ChEBI" id="CHEBI:57540"/>
    </ligand>
</feature>
<feature type="binding site" evidence="1">
    <location>
        <position position="227"/>
    </location>
    <ligand>
        <name>substrate</name>
    </ligand>
</feature>
<feature type="binding site" evidence="1">
    <location>
        <position position="231"/>
    </location>
    <ligand>
        <name>substrate</name>
    </ligand>
</feature>
<feature type="binding site" evidence="1">
    <location>
        <position position="232"/>
    </location>
    <ligand>
        <name>NAD(+)</name>
        <dbReference type="ChEBI" id="CHEBI:57540"/>
    </ligand>
</feature>
<feature type="binding site" evidence="1">
    <location>
        <begin position="261"/>
        <end position="266"/>
    </location>
    <ligand>
        <name>NAD(+)</name>
        <dbReference type="ChEBI" id="CHEBI:57540"/>
    </ligand>
</feature>
<feature type="binding site" evidence="1">
    <location>
        <position position="284"/>
    </location>
    <ligand>
        <name>NAD(+)</name>
        <dbReference type="ChEBI" id="CHEBI:57540"/>
    </ligand>
</feature>
<feature type="binding site" evidence="1">
    <location>
        <position position="319"/>
    </location>
    <ligand>
        <name>NAD(+)</name>
        <dbReference type="ChEBI" id="CHEBI:57540"/>
    </ligand>
</feature>
<feature type="binding site" evidence="1">
    <location>
        <begin position="340"/>
        <end position="342"/>
    </location>
    <ligand>
        <name>NAD(+)</name>
        <dbReference type="ChEBI" id="CHEBI:57540"/>
    </ligand>
</feature>
<feature type="binding site" evidence="1">
    <location>
        <position position="385"/>
    </location>
    <ligand>
        <name>NAD(+)</name>
        <dbReference type="ChEBI" id="CHEBI:57540"/>
    </ligand>
</feature>
<accession>A5ENA7</accession>
<protein>
    <recommendedName>
        <fullName evidence="1">Adenosylhomocysteinase</fullName>
        <ecNumber evidence="1">3.13.2.1</ecNumber>
    </recommendedName>
    <alternativeName>
        <fullName evidence="1">S-adenosyl-L-homocysteine hydrolase</fullName>
        <shortName evidence="1">AdoHcyase</shortName>
    </alternativeName>
</protein>
<gene>
    <name evidence="1" type="primary">ahcY</name>
    <name type="ordered locus">BBta_5698</name>
</gene>
<name>SAHH_BRASB</name>
<evidence type="ECO:0000255" key="1">
    <source>
        <dbReference type="HAMAP-Rule" id="MF_00563"/>
    </source>
</evidence>
<dbReference type="EC" id="3.13.2.1" evidence="1"/>
<dbReference type="EMBL" id="CP000494">
    <property type="protein sequence ID" value="ABQ37651.1"/>
    <property type="molecule type" value="Genomic_DNA"/>
</dbReference>
<dbReference type="RefSeq" id="WP_012045610.1">
    <property type="nucleotide sequence ID" value="NC_009485.1"/>
</dbReference>
<dbReference type="SMR" id="A5ENA7"/>
<dbReference type="STRING" id="288000.BBta_5698"/>
<dbReference type="KEGG" id="bbt:BBta_5698"/>
<dbReference type="eggNOG" id="COG0499">
    <property type="taxonomic scope" value="Bacteria"/>
</dbReference>
<dbReference type="HOGENOM" id="CLU_025194_2_1_5"/>
<dbReference type="OrthoDB" id="9802717at2"/>
<dbReference type="UniPathway" id="UPA00314">
    <property type="reaction ID" value="UER00076"/>
</dbReference>
<dbReference type="Proteomes" id="UP000000246">
    <property type="component" value="Chromosome"/>
</dbReference>
<dbReference type="GO" id="GO:0005829">
    <property type="term" value="C:cytosol"/>
    <property type="evidence" value="ECO:0007669"/>
    <property type="project" value="TreeGrafter"/>
</dbReference>
<dbReference type="GO" id="GO:0004013">
    <property type="term" value="F:adenosylhomocysteinase activity"/>
    <property type="evidence" value="ECO:0007669"/>
    <property type="project" value="UniProtKB-UniRule"/>
</dbReference>
<dbReference type="GO" id="GO:0071269">
    <property type="term" value="P:L-homocysteine biosynthetic process"/>
    <property type="evidence" value="ECO:0007669"/>
    <property type="project" value="UniProtKB-UniRule"/>
</dbReference>
<dbReference type="GO" id="GO:0006730">
    <property type="term" value="P:one-carbon metabolic process"/>
    <property type="evidence" value="ECO:0007669"/>
    <property type="project" value="UniProtKB-KW"/>
</dbReference>
<dbReference type="GO" id="GO:0033353">
    <property type="term" value="P:S-adenosylmethionine cycle"/>
    <property type="evidence" value="ECO:0007669"/>
    <property type="project" value="TreeGrafter"/>
</dbReference>
<dbReference type="CDD" id="cd00401">
    <property type="entry name" value="SAHH"/>
    <property type="match status" value="1"/>
</dbReference>
<dbReference type="FunFam" id="3.40.50.720:FF:000004">
    <property type="entry name" value="Adenosylhomocysteinase"/>
    <property type="match status" value="1"/>
</dbReference>
<dbReference type="Gene3D" id="3.40.50.1480">
    <property type="entry name" value="Adenosylhomocysteinase-like"/>
    <property type="match status" value="1"/>
</dbReference>
<dbReference type="Gene3D" id="3.40.50.720">
    <property type="entry name" value="NAD(P)-binding Rossmann-like Domain"/>
    <property type="match status" value="1"/>
</dbReference>
<dbReference type="HAMAP" id="MF_00563">
    <property type="entry name" value="AdoHcyase"/>
    <property type="match status" value="1"/>
</dbReference>
<dbReference type="InterPro" id="IPR042172">
    <property type="entry name" value="Adenosylhomocyst_ase-like_sf"/>
</dbReference>
<dbReference type="InterPro" id="IPR000043">
    <property type="entry name" value="Adenosylhomocysteinase-like"/>
</dbReference>
<dbReference type="InterPro" id="IPR015878">
    <property type="entry name" value="Ado_hCys_hydrolase_NAD-bd"/>
</dbReference>
<dbReference type="InterPro" id="IPR036291">
    <property type="entry name" value="NAD(P)-bd_dom_sf"/>
</dbReference>
<dbReference type="InterPro" id="IPR020082">
    <property type="entry name" value="S-Ado-L-homoCys_hydrolase_CS"/>
</dbReference>
<dbReference type="NCBIfam" id="TIGR00936">
    <property type="entry name" value="ahcY"/>
    <property type="match status" value="1"/>
</dbReference>
<dbReference type="NCBIfam" id="NF004005">
    <property type="entry name" value="PRK05476.2-3"/>
    <property type="match status" value="1"/>
</dbReference>
<dbReference type="PANTHER" id="PTHR23420">
    <property type="entry name" value="ADENOSYLHOMOCYSTEINASE"/>
    <property type="match status" value="1"/>
</dbReference>
<dbReference type="PANTHER" id="PTHR23420:SF0">
    <property type="entry name" value="ADENOSYLHOMOCYSTEINASE"/>
    <property type="match status" value="1"/>
</dbReference>
<dbReference type="Pfam" id="PF05221">
    <property type="entry name" value="AdoHcyase"/>
    <property type="match status" value="1"/>
</dbReference>
<dbReference type="Pfam" id="PF00670">
    <property type="entry name" value="AdoHcyase_NAD"/>
    <property type="match status" value="1"/>
</dbReference>
<dbReference type="PIRSF" id="PIRSF001109">
    <property type="entry name" value="Ad_hcy_hydrolase"/>
    <property type="match status" value="1"/>
</dbReference>
<dbReference type="SMART" id="SM00996">
    <property type="entry name" value="AdoHcyase"/>
    <property type="match status" value="1"/>
</dbReference>
<dbReference type="SMART" id="SM00997">
    <property type="entry name" value="AdoHcyase_NAD"/>
    <property type="match status" value="1"/>
</dbReference>
<dbReference type="SUPFAM" id="SSF52283">
    <property type="entry name" value="Formate/glycerate dehydrogenase catalytic domain-like"/>
    <property type="match status" value="1"/>
</dbReference>
<dbReference type="SUPFAM" id="SSF51735">
    <property type="entry name" value="NAD(P)-binding Rossmann-fold domains"/>
    <property type="match status" value="1"/>
</dbReference>
<dbReference type="PROSITE" id="PS00738">
    <property type="entry name" value="ADOHCYASE_1"/>
    <property type="match status" value="1"/>
</dbReference>
<dbReference type="PROSITE" id="PS00739">
    <property type="entry name" value="ADOHCYASE_2"/>
    <property type="match status" value="1"/>
</dbReference>
<proteinExistence type="inferred from homology"/>
<sequence length="473" mass="51751">MTAKPGFNDYIVKDISLAEFGRKEISLAETEMPGLMATREEYGPKQPLKGARIAGSLHMTIQTAVLIETLAALGADIRWVSCNIYSTQDHAAAAIAAAGIPVFAVKGETLADYWDYTAKLFDWHGGGHPNMILDDGGDATMYVHLGLRAENGDTAFLDKPASEEEEVFFALLKKQLKEKPKGYFAAIAASIKGVSEETTTGVHRLYDMQKAGTLLWPAINVNDSVTKSKFDNLYGCRESLVDGIRRGTDVMMSGKVAMVAGFGDVGKGSAASLRQAGCRVLVSEIDPICALQAAMEGYEVVTMEDAAPRADIFVTATGNKDIITIEHMRAMKDRAIVCNIGHFDNEIQVASLKNLKWTNIKPQVDEITFPDGKRMILLSEGRLVNLGNAMGHPSFVMSASFTNQTLAQIELYANNKDGKYKKEVYVLPKSLDEKVARLHLAKIGVKLTELRPDQAAYIGVKQEGPFKSDHYRY</sequence>
<comment type="function">
    <text evidence="1">May play a key role in the regulation of the intracellular concentration of adenosylhomocysteine.</text>
</comment>
<comment type="catalytic activity">
    <reaction evidence="1">
        <text>S-adenosyl-L-homocysteine + H2O = L-homocysteine + adenosine</text>
        <dbReference type="Rhea" id="RHEA:21708"/>
        <dbReference type="ChEBI" id="CHEBI:15377"/>
        <dbReference type="ChEBI" id="CHEBI:16335"/>
        <dbReference type="ChEBI" id="CHEBI:57856"/>
        <dbReference type="ChEBI" id="CHEBI:58199"/>
        <dbReference type="EC" id="3.13.2.1"/>
    </reaction>
</comment>
<comment type="cofactor">
    <cofactor evidence="1">
        <name>NAD(+)</name>
        <dbReference type="ChEBI" id="CHEBI:57540"/>
    </cofactor>
    <text evidence="1">Binds 1 NAD(+) per subunit.</text>
</comment>
<comment type="pathway">
    <text evidence="1">Amino-acid biosynthesis; L-homocysteine biosynthesis; L-homocysteine from S-adenosyl-L-homocysteine: step 1/1.</text>
</comment>
<comment type="subcellular location">
    <subcellularLocation>
        <location evidence="1">Cytoplasm</location>
    </subcellularLocation>
</comment>
<comment type="similarity">
    <text evidence="1">Belongs to the adenosylhomocysteinase family.</text>
</comment>
<keyword id="KW-0963">Cytoplasm</keyword>
<keyword id="KW-0378">Hydrolase</keyword>
<keyword id="KW-0520">NAD</keyword>
<keyword id="KW-0554">One-carbon metabolism</keyword>
<keyword id="KW-1185">Reference proteome</keyword>
<organism>
    <name type="scientific">Bradyrhizobium sp. (strain BTAi1 / ATCC BAA-1182)</name>
    <dbReference type="NCBI Taxonomy" id="288000"/>
    <lineage>
        <taxon>Bacteria</taxon>
        <taxon>Pseudomonadati</taxon>
        <taxon>Pseudomonadota</taxon>
        <taxon>Alphaproteobacteria</taxon>
        <taxon>Hyphomicrobiales</taxon>
        <taxon>Nitrobacteraceae</taxon>
        <taxon>Bradyrhizobium</taxon>
    </lineage>
</organism>